<name>MI4GD_BOVIN</name>
<accession>Q3ZC21</accession>
<feature type="chain" id="PRO_0000337088" description="MIF4G domain-containing protein">
    <location>
        <begin position="1"/>
        <end position="222"/>
    </location>
</feature>
<feature type="domain" description="MIF4G">
    <location>
        <begin position="3"/>
        <end position="205"/>
    </location>
</feature>
<sequence>MGEPSKEEYKIQCFDAETQQLLKTALKDPGAVDLEKVANVIVDHSLQDSVFSKEAGRMCYAIIQAESKQAGQSVFRRGLLNRLQQEYQTREQLRARSLQGWVCYVTFICNIFDYLRVNNMPMMALVNPVYDCLFRLAQPDSLSKEEEVDCLVLQLHRVGEQLEKMNGQRMDELFVLIRDGFLLPAGLSSLAQLLLLEIIEFRAAGWKTTPAAHKYYYSEVSD</sequence>
<gene>
    <name type="primary">MIF4GD</name>
</gene>
<comment type="function">
    <text evidence="1">Functions in replication-dependent translation of histone mRNAs which differ from other eukaryotic mRNAs in that they do not end with a poly-A tail but a stem-loop. May participate in circularizing those mRNAs specifically enhancing their translation (By similarity).</text>
</comment>
<comment type="subunit">
    <text evidence="1">Interacts with EIF4G1, EIF4G2 and SLBP; probably tethered by SLBP to the 3'-end of mRNAs ending with the histone stem-loop, it also interacts with EIF4G1 which is bound to their 5'-end.</text>
</comment>
<comment type="subcellular location">
    <subcellularLocation>
        <location evidence="1">Cytoplasm</location>
    </subcellularLocation>
    <subcellularLocation>
        <location evidence="1">Nucleus</location>
    </subcellularLocation>
</comment>
<comment type="similarity">
    <text evidence="2">Belongs to the MIF4GD family.</text>
</comment>
<keyword id="KW-0963">Cytoplasm</keyword>
<keyword id="KW-0539">Nucleus</keyword>
<keyword id="KW-1185">Reference proteome</keyword>
<keyword id="KW-0810">Translation regulation</keyword>
<organism>
    <name type="scientific">Bos taurus</name>
    <name type="common">Bovine</name>
    <dbReference type="NCBI Taxonomy" id="9913"/>
    <lineage>
        <taxon>Eukaryota</taxon>
        <taxon>Metazoa</taxon>
        <taxon>Chordata</taxon>
        <taxon>Craniata</taxon>
        <taxon>Vertebrata</taxon>
        <taxon>Euteleostomi</taxon>
        <taxon>Mammalia</taxon>
        <taxon>Eutheria</taxon>
        <taxon>Laurasiatheria</taxon>
        <taxon>Artiodactyla</taxon>
        <taxon>Ruminantia</taxon>
        <taxon>Pecora</taxon>
        <taxon>Bovidae</taxon>
        <taxon>Bovinae</taxon>
        <taxon>Bos</taxon>
    </lineage>
</organism>
<evidence type="ECO:0000250" key="1"/>
<evidence type="ECO:0000305" key="2"/>
<reference key="1">
    <citation type="submission" date="2005-08" db="EMBL/GenBank/DDBJ databases">
        <authorList>
            <consortium name="NIH - Mammalian Gene Collection (MGC) project"/>
        </authorList>
    </citation>
    <scope>NUCLEOTIDE SEQUENCE [LARGE SCALE MRNA]</scope>
    <source>
        <strain>Crossbred X Angus</strain>
        <tissue>Ileum</tissue>
    </source>
</reference>
<proteinExistence type="evidence at transcript level"/>
<dbReference type="EMBL" id="BC102971">
    <property type="protein sequence ID" value="AAI02972.1"/>
    <property type="molecule type" value="mRNA"/>
</dbReference>
<dbReference type="RefSeq" id="NP_001029904.1">
    <property type="nucleotide sequence ID" value="NM_001034732.1"/>
</dbReference>
<dbReference type="RefSeq" id="XP_024836146.1">
    <property type="nucleotide sequence ID" value="XM_024980378.2"/>
</dbReference>
<dbReference type="RefSeq" id="XP_024836147.1">
    <property type="nucleotide sequence ID" value="XM_024980379.2"/>
</dbReference>
<dbReference type="RefSeq" id="XP_059734195.1">
    <property type="nucleotide sequence ID" value="XM_059878212.1"/>
</dbReference>
<dbReference type="SMR" id="Q3ZC21"/>
<dbReference type="FunCoup" id="Q3ZC21">
    <property type="interactions" value="1666"/>
</dbReference>
<dbReference type="STRING" id="9913.ENSBTAP00000034575"/>
<dbReference type="PaxDb" id="9913-ENSBTAP00000034575"/>
<dbReference type="GeneID" id="613305"/>
<dbReference type="KEGG" id="bta:613305"/>
<dbReference type="CTD" id="57409"/>
<dbReference type="VEuPathDB" id="HostDB:ENSBTAG00000030168"/>
<dbReference type="eggNOG" id="KOG3942">
    <property type="taxonomic scope" value="Eukaryota"/>
</dbReference>
<dbReference type="HOGENOM" id="CLU_081010_1_0_1"/>
<dbReference type="InParanoid" id="Q3ZC21"/>
<dbReference type="OMA" id="PCCSCTG"/>
<dbReference type="OrthoDB" id="6357832at2759"/>
<dbReference type="Proteomes" id="UP000009136">
    <property type="component" value="Chromosome 19"/>
</dbReference>
<dbReference type="Bgee" id="ENSBTAG00000030168">
    <property type="expression patterns" value="Expressed in corpus luteum and 105 other cell types or tissues"/>
</dbReference>
<dbReference type="GO" id="GO:0005829">
    <property type="term" value="C:cytosol"/>
    <property type="evidence" value="ECO:0000318"/>
    <property type="project" value="GO_Central"/>
</dbReference>
<dbReference type="GO" id="GO:0005634">
    <property type="term" value="C:nucleus"/>
    <property type="evidence" value="ECO:0007669"/>
    <property type="project" value="UniProtKB-SubCell"/>
</dbReference>
<dbReference type="GO" id="GO:0003723">
    <property type="term" value="F:RNA binding"/>
    <property type="evidence" value="ECO:0007669"/>
    <property type="project" value="InterPro"/>
</dbReference>
<dbReference type="GO" id="GO:0008494">
    <property type="term" value="F:translation activator activity"/>
    <property type="evidence" value="ECO:0000318"/>
    <property type="project" value="GO_Central"/>
</dbReference>
<dbReference type="GO" id="GO:0006446">
    <property type="term" value="P:regulation of translational initiation"/>
    <property type="evidence" value="ECO:0000318"/>
    <property type="project" value="GO_Central"/>
</dbReference>
<dbReference type="FunFam" id="1.25.40.180:FF:000025">
    <property type="entry name" value="MIF4G domain containing a"/>
    <property type="match status" value="1"/>
</dbReference>
<dbReference type="Gene3D" id="1.25.40.180">
    <property type="match status" value="1"/>
</dbReference>
<dbReference type="InterPro" id="IPR016024">
    <property type="entry name" value="ARM-type_fold"/>
</dbReference>
<dbReference type="InterPro" id="IPR003890">
    <property type="entry name" value="MIF4G-like_typ-3"/>
</dbReference>
<dbReference type="InterPro" id="IPR051367">
    <property type="entry name" value="mRNA_TranslReg/HistoneTransl"/>
</dbReference>
<dbReference type="PANTHER" id="PTHR23254">
    <property type="entry name" value="EIF4G DOMAIN PROTEIN"/>
    <property type="match status" value="1"/>
</dbReference>
<dbReference type="PANTHER" id="PTHR23254:SF17">
    <property type="entry name" value="MIF4G DOMAIN-CONTAINING PROTEIN"/>
    <property type="match status" value="1"/>
</dbReference>
<dbReference type="Pfam" id="PF02854">
    <property type="entry name" value="MIF4G"/>
    <property type="match status" value="1"/>
</dbReference>
<dbReference type="SUPFAM" id="SSF48371">
    <property type="entry name" value="ARM repeat"/>
    <property type="match status" value="1"/>
</dbReference>
<protein>
    <recommendedName>
        <fullName>MIF4G domain-containing protein</fullName>
    </recommendedName>
</protein>